<evidence type="ECO:0000255" key="1">
    <source>
        <dbReference type="HAMAP-Rule" id="MF_00362"/>
    </source>
</evidence>
<evidence type="ECO:0000305" key="2"/>
<dbReference type="EMBL" id="CP000872">
    <property type="protein sequence ID" value="ABX62317.1"/>
    <property type="molecule type" value="Genomic_DNA"/>
</dbReference>
<dbReference type="RefSeq" id="WP_002964372.1">
    <property type="nucleotide sequence ID" value="NC_010103.1"/>
</dbReference>
<dbReference type="SMR" id="A9M5R2"/>
<dbReference type="GeneID" id="93016430"/>
<dbReference type="KEGG" id="bcs:BCAN_A1268"/>
<dbReference type="HOGENOM" id="CLU_092227_0_0_5"/>
<dbReference type="PhylomeDB" id="A9M5R2"/>
<dbReference type="Proteomes" id="UP000001385">
    <property type="component" value="Chromosome I"/>
</dbReference>
<dbReference type="GO" id="GO:0015934">
    <property type="term" value="C:large ribosomal subunit"/>
    <property type="evidence" value="ECO:0007669"/>
    <property type="project" value="InterPro"/>
</dbReference>
<dbReference type="GO" id="GO:0070180">
    <property type="term" value="F:large ribosomal subunit rRNA binding"/>
    <property type="evidence" value="ECO:0007669"/>
    <property type="project" value="UniProtKB-UniRule"/>
</dbReference>
<dbReference type="GO" id="GO:0003735">
    <property type="term" value="F:structural constituent of ribosome"/>
    <property type="evidence" value="ECO:0007669"/>
    <property type="project" value="InterPro"/>
</dbReference>
<dbReference type="GO" id="GO:0006412">
    <property type="term" value="P:translation"/>
    <property type="evidence" value="ECO:0007669"/>
    <property type="project" value="UniProtKB-UniRule"/>
</dbReference>
<dbReference type="CDD" id="cd05797">
    <property type="entry name" value="Ribosomal_L10"/>
    <property type="match status" value="1"/>
</dbReference>
<dbReference type="Gene3D" id="3.30.70.1730">
    <property type="match status" value="1"/>
</dbReference>
<dbReference type="Gene3D" id="6.10.250.290">
    <property type="match status" value="1"/>
</dbReference>
<dbReference type="HAMAP" id="MF_00362">
    <property type="entry name" value="Ribosomal_uL10"/>
    <property type="match status" value="1"/>
</dbReference>
<dbReference type="InterPro" id="IPR001790">
    <property type="entry name" value="Ribosomal_uL10"/>
</dbReference>
<dbReference type="InterPro" id="IPR043141">
    <property type="entry name" value="Ribosomal_uL10-like_sf"/>
</dbReference>
<dbReference type="InterPro" id="IPR022973">
    <property type="entry name" value="Ribosomal_uL10_bac"/>
</dbReference>
<dbReference type="InterPro" id="IPR047865">
    <property type="entry name" value="Ribosomal_uL10_bac_type"/>
</dbReference>
<dbReference type="InterPro" id="IPR002363">
    <property type="entry name" value="Ribosomal_uL10_CS_bac"/>
</dbReference>
<dbReference type="NCBIfam" id="NF000955">
    <property type="entry name" value="PRK00099.1-1"/>
    <property type="match status" value="1"/>
</dbReference>
<dbReference type="PANTHER" id="PTHR11560">
    <property type="entry name" value="39S RIBOSOMAL PROTEIN L10, MITOCHONDRIAL"/>
    <property type="match status" value="1"/>
</dbReference>
<dbReference type="Pfam" id="PF00466">
    <property type="entry name" value="Ribosomal_L10"/>
    <property type="match status" value="1"/>
</dbReference>
<dbReference type="SUPFAM" id="SSF160369">
    <property type="entry name" value="Ribosomal protein L10-like"/>
    <property type="match status" value="1"/>
</dbReference>
<dbReference type="PROSITE" id="PS01109">
    <property type="entry name" value="RIBOSOMAL_L10"/>
    <property type="match status" value="1"/>
</dbReference>
<sequence>MDRAEKREFVAWLNGAFKESGSVVVAHYTGLTVAQMSDLRSKMRDAGGSVKVAKNRLAKIALQGTESEGIADLFTGQTVVAYANDPITAPKVAVEFAKANDKLVILGGAMGATTLNADGVKSLASLPSLDELRAKLVGMIQTPAQRLAVLTSAPAGQIARVIGAHARKNEAA</sequence>
<gene>
    <name evidence="1" type="primary">rplJ</name>
    <name type="ordered locus">BCAN_A1268</name>
</gene>
<keyword id="KW-1185">Reference proteome</keyword>
<keyword id="KW-0687">Ribonucleoprotein</keyword>
<keyword id="KW-0689">Ribosomal protein</keyword>
<keyword id="KW-0694">RNA-binding</keyword>
<keyword id="KW-0699">rRNA-binding</keyword>
<reference key="1">
    <citation type="submission" date="2007-10" db="EMBL/GenBank/DDBJ databases">
        <title>Brucella canis ATCC 23365 whole genome shotgun sequencing project.</title>
        <authorList>
            <person name="Setubal J.C."/>
            <person name="Bowns C."/>
            <person name="Boyle S."/>
            <person name="Crasta O.R."/>
            <person name="Czar M.J."/>
            <person name="Dharmanolla C."/>
            <person name="Gillespie J.J."/>
            <person name="Kenyon R.W."/>
            <person name="Lu J."/>
            <person name="Mane S."/>
            <person name="Mohapatra S."/>
            <person name="Nagrani S."/>
            <person name="Purkayastha A."/>
            <person name="Rajasimha H.K."/>
            <person name="Shallom J.M."/>
            <person name="Shallom S."/>
            <person name="Shukla M."/>
            <person name="Snyder E.E."/>
            <person name="Sobral B.W."/>
            <person name="Wattam A.R."/>
            <person name="Will R."/>
            <person name="Williams K."/>
            <person name="Yoo H."/>
            <person name="Bruce D."/>
            <person name="Detter C."/>
            <person name="Munk C."/>
            <person name="Brettin T.S."/>
        </authorList>
    </citation>
    <scope>NUCLEOTIDE SEQUENCE [LARGE SCALE GENOMIC DNA]</scope>
    <source>
        <strain>ATCC 23365 / NCTC 10854 / RM-666</strain>
    </source>
</reference>
<protein>
    <recommendedName>
        <fullName evidence="1">Large ribosomal subunit protein uL10</fullName>
    </recommendedName>
    <alternativeName>
        <fullName evidence="2">50S ribosomal protein L10</fullName>
    </alternativeName>
</protein>
<name>RL10_BRUC2</name>
<feature type="chain" id="PRO_1000079534" description="Large ribosomal subunit protein uL10">
    <location>
        <begin position="1"/>
        <end position="172"/>
    </location>
</feature>
<proteinExistence type="inferred from homology"/>
<organism>
    <name type="scientific">Brucella canis (strain ATCC 23365 / NCTC 10854 / RM-666)</name>
    <dbReference type="NCBI Taxonomy" id="483179"/>
    <lineage>
        <taxon>Bacteria</taxon>
        <taxon>Pseudomonadati</taxon>
        <taxon>Pseudomonadota</taxon>
        <taxon>Alphaproteobacteria</taxon>
        <taxon>Hyphomicrobiales</taxon>
        <taxon>Brucellaceae</taxon>
        <taxon>Brucella/Ochrobactrum group</taxon>
        <taxon>Brucella</taxon>
    </lineage>
</organism>
<comment type="function">
    <text evidence="1">Forms part of the ribosomal stalk, playing a central role in the interaction of the ribosome with GTP-bound translation factors.</text>
</comment>
<comment type="subunit">
    <text evidence="1">Part of the ribosomal stalk of the 50S ribosomal subunit. The N-terminus interacts with L11 and the large rRNA to form the base of the stalk. The C-terminus forms an elongated spine to which L12 dimers bind in a sequential fashion forming a multimeric L10(L12)X complex.</text>
</comment>
<comment type="similarity">
    <text evidence="1">Belongs to the universal ribosomal protein uL10 family.</text>
</comment>
<accession>A9M5R2</accession>